<gene>
    <name evidence="1" type="primary">dnaJ</name>
    <name type="ordered locus">RrIowa_0287</name>
</gene>
<feature type="chain" id="PRO_1000085275" description="Chaperone protein DnaJ">
    <location>
        <begin position="1"/>
        <end position="373"/>
    </location>
</feature>
<feature type="domain" description="J" evidence="1">
    <location>
        <begin position="4"/>
        <end position="68"/>
    </location>
</feature>
<feature type="repeat" description="CXXCXGXG motif">
    <location>
        <begin position="149"/>
        <end position="156"/>
    </location>
</feature>
<feature type="repeat" description="CXXCXGXG motif">
    <location>
        <begin position="166"/>
        <end position="173"/>
    </location>
</feature>
<feature type="repeat" description="CXXCXGXG motif">
    <location>
        <begin position="188"/>
        <end position="195"/>
    </location>
</feature>
<feature type="repeat" description="CXXCXGXG motif">
    <location>
        <begin position="202"/>
        <end position="209"/>
    </location>
</feature>
<feature type="zinc finger region" description="CR-type" evidence="1">
    <location>
        <begin position="136"/>
        <end position="214"/>
    </location>
</feature>
<feature type="binding site" evidence="1">
    <location>
        <position position="149"/>
    </location>
    <ligand>
        <name>Zn(2+)</name>
        <dbReference type="ChEBI" id="CHEBI:29105"/>
        <label>1</label>
    </ligand>
</feature>
<feature type="binding site" evidence="1">
    <location>
        <position position="152"/>
    </location>
    <ligand>
        <name>Zn(2+)</name>
        <dbReference type="ChEBI" id="CHEBI:29105"/>
        <label>1</label>
    </ligand>
</feature>
<feature type="binding site" evidence="1">
    <location>
        <position position="166"/>
    </location>
    <ligand>
        <name>Zn(2+)</name>
        <dbReference type="ChEBI" id="CHEBI:29105"/>
        <label>2</label>
    </ligand>
</feature>
<feature type="binding site" evidence="1">
    <location>
        <position position="169"/>
    </location>
    <ligand>
        <name>Zn(2+)</name>
        <dbReference type="ChEBI" id="CHEBI:29105"/>
        <label>2</label>
    </ligand>
</feature>
<feature type="binding site" evidence="1">
    <location>
        <position position="188"/>
    </location>
    <ligand>
        <name>Zn(2+)</name>
        <dbReference type="ChEBI" id="CHEBI:29105"/>
        <label>2</label>
    </ligand>
</feature>
<feature type="binding site" evidence="1">
    <location>
        <position position="191"/>
    </location>
    <ligand>
        <name>Zn(2+)</name>
        <dbReference type="ChEBI" id="CHEBI:29105"/>
        <label>2</label>
    </ligand>
</feature>
<feature type="binding site" evidence="1">
    <location>
        <position position="202"/>
    </location>
    <ligand>
        <name>Zn(2+)</name>
        <dbReference type="ChEBI" id="CHEBI:29105"/>
        <label>1</label>
    </ligand>
</feature>
<feature type="binding site" evidence="1">
    <location>
        <position position="205"/>
    </location>
    <ligand>
        <name>Zn(2+)</name>
        <dbReference type="ChEBI" id="CHEBI:29105"/>
        <label>1</label>
    </ligand>
</feature>
<evidence type="ECO:0000255" key="1">
    <source>
        <dbReference type="HAMAP-Rule" id="MF_01152"/>
    </source>
</evidence>
<comment type="function">
    <text evidence="1">Participates actively in the response to hyperosmotic and heat shock by preventing the aggregation of stress-denatured proteins and by disaggregating proteins, also in an autonomous, DnaK-independent fashion. Unfolded proteins bind initially to DnaJ; upon interaction with the DnaJ-bound protein, DnaK hydrolyzes its bound ATP, resulting in the formation of a stable complex. GrpE releases ADP from DnaK; ATP binding to DnaK triggers the release of the substrate protein, thus completing the reaction cycle. Several rounds of ATP-dependent interactions between DnaJ, DnaK and GrpE are required for fully efficient folding. Also involved, together with DnaK and GrpE, in the DNA replication of plasmids through activation of initiation proteins.</text>
</comment>
<comment type="cofactor">
    <cofactor evidence="1">
        <name>Zn(2+)</name>
        <dbReference type="ChEBI" id="CHEBI:29105"/>
    </cofactor>
    <text evidence="1">Binds 2 Zn(2+) ions per monomer.</text>
</comment>
<comment type="subunit">
    <text evidence="1">Homodimer.</text>
</comment>
<comment type="subcellular location">
    <subcellularLocation>
        <location evidence="1">Cytoplasm</location>
    </subcellularLocation>
</comment>
<comment type="domain">
    <text evidence="1">The J domain is necessary and sufficient to stimulate DnaK ATPase activity. Zinc center 1 plays an important role in the autonomous, DnaK-independent chaperone activity of DnaJ. Zinc center 2 is essential for interaction with DnaK and for DnaJ activity.</text>
</comment>
<comment type="similarity">
    <text evidence="1">Belongs to the DnaJ family.</text>
</comment>
<proteinExistence type="inferred from homology"/>
<reference key="1">
    <citation type="journal article" date="2008" name="Infect. Immun.">
        <title>Genomic comparison of virulent Rickettsia rickettsii Sheila Smith and avirulent Rickettsia rickettsii Iowa.</title>
        <authorList>
            <person name="Ellison D.W."/>
            <person name="Clark T.R."/>
            <person name="Sturdevant D.E."/>
            <person name="Virtaneva K."/>
            <person name="Porcella S.F."/>
            <person name="Hackstadt T."/>
        </authorList>
    </citation>
    <scope>NUCLEOTIDE SEQUENCE [LARGE SCALE GENOMIC DNA]</scope>
    <source>
        <strain>Iowa</strain>
    </source>
</reference>
<keyword id="KW-0143">Chaperone</keyword>
<keyword id="KW-0963">Cytoplasm</keyword>
<keyword id="KW-0235">DNA replication</keyword>
<keyword id="KW-0479">Metal-binding</keyword>
<keyword id="KW-0677">Repeat</keyword>
<keyword id="KW-0346">Stress response</keyword>
<keyword id="KW-0862">Zinc</keyword>
<keyword id="KW-0863">Zinc-finger</keyword>
<dbReference type="EMBL" id="CP000766">
    <property type="protein sequence ID" value="ABY72196.1"/>
    <property type="molecule type" value="Genomic_DNA"/>
</dbReference>
<dbReference type="RefSeq" id="WP_012262250.1">
    <property type="nucleotide sequence ID" value="NC_010263.3"/>
</dbReference>
<dbReference type="SMR" id="B0BWH0"/>
<dbReference type="KEGG" id="rrj:RrIowa_0287"/>
<dbReference type="eggNOG" id="COG0484">
    <property type="taxonomic scope" value="Bacteria"/>
</dbReference>
<dbReference type="HOGENOM" id="CLU_017633_0_7_5"/>
<dbReference type="Proteomes" id="UP000000796">
    <property type="component" value="Chromosome"/>
</dbReference>
<dbReference type="GO" id="GO:0005737">
    <property type="term" value="C:cytoplasm"/>
    <property type="evidence" value="ECO:0007669"/>
    <property type="project" value="UniProtKB-SubCell"/>
</dbReference>
<dbReference type="GO" id="GO:0005524">
    <property type="term" value="F:ATP binding"/>
    <property type="evidence" value="ECO:0007669"/>
    <property type="project" value="InterPro"/>
</dbReference>
<dbReference type="GO" id="GO:0031072">
    <property type="term" value="F:heat shock protein binding"/>
    <property type="evidence" value="ECO:0007669"/>
    <property type="project" value="InterPro"/>
</dbReference>
<dbReference type="GO" id="GO:0051082">
    <property type="term" value="F:unfolded protein binding"/>
    <property type="evidence" value="ECO:0007669"/>
    <property type="project" value="UniProtKB-UniRule"/>
</dbReference>
<dbReference type="GO" id="GO:0008270">
    <property type="term" value="F:zinc ion binding"/>
    <property type="evidence" value="ECO:0007669"/>
    <property type="project" value="UniProtKB-UniRule"/>
</dbReference>
<dbReference type="GO" id="GO:0051085">
    <property type="term" value="P:chaperone cofactor-dependent protein refolding"/>
    <property type="evidence" value="ECO:0007669"/>
    <property type="project" value="TreeGrafter"/>
</dbReference>
<dbReference type="GO" id="GO:0006260">
    <property type="term" value="P:DNA replication"/>
    <property type="evidence" value="ECO:0007669"/>
    <property type="project" value="UniProtKB-KW"/>
</dbReference>
<dbReference type="GO" id="GO:0042026">
    <property type="term" value="P:protein refolding"/>
    <property type="evidence" value="ECO:0007669"/>
    <property type="project" value="TreeGrafter"/>
</dbReference>
<dbReference type="GO" id="GO:0009408">
    <property type="term" value="P:response to heat"/>
    <property type="evidence" value="ECO:0007669"/>
    <property type="project" value="InterPro"/>
</dbReference>
<dbReference type="CDD" id="cd06257">
    <property type="entry name" value="DnaJ"/>
    <property type="match status" value="1"/>
</dbReference>
<dbReference type="CDD" id="cd10747">
    <property type="entry name" value="DnaJ_C"/>
    <property type="match status" value="1"/>
</dbReference>
<dbReference type="CDD" id="cd10719">
    <property type="entry name" value="DnaJ_zf"/>
    <property type="match status" value="1"/>
</dbReference>
<dbReference type="FunFam" id="1.10.287.110:FF:000153">
    <property type="entry name" value="Chaperone protein DnaJ"/>
    <property type="match status" value="1"/>
</dbReference>
<dbReference type="FunFam" id="2.10.230.10:FF:000002">
    <property type="entry name" value="Molecular chaperone DnaJ"/>
    <property type="match status" value="1"/>
</dbReference>
<dbReference type="FunFam" id="2.60.260.20:FF:000004">
    <property type="entry name" value="Molecular chaperone DnaJ"/>
    <property type="match status" value="1"/>
</dbReference>
<dbReference type="Gene3D" id="1.10.287.110">
    <property type="entry name" value="DnaJ domain"/>
    <property type="match status" value="1"/>
</dbReference>
<dbReference type="Gene3D" id="2.10.230.10">
    <property type="entry name" value="Heat shock protein DnaJ, cysteine-rich domain"/>
    <property type="match status" value="1"/>
</dbReference>
<dbReference type="Gene3D" id="2.60.260.20">
    <property type="entry name" value="Urease metallochaperone UreE, N-terminal domain"/>
    <property type="match status" value="2"/>
</dbReference>
<dbReference type="HAMAP" id="MF_01152">
    <property type="entry name" value="DnaJ"/>
    <property type="match status" value="1"/>
</dbReference>
<dbReference type="InterPro" id="IPR012724">
    <property type="entry name" value="DnaJ"/>
</dbReference>
<dbReference type="InterPro" id="IPR002939">
    <property type="entry name" value="DnaJ_C"/>
</dbReference>
<dbReference type="InterPro" id="IPR001623">
    <property type="entry name" value="DnaJ_domain"/>
</dbReference>
<dbReference type="InterPro" id="IPR018253">
    <property type="entry name" value="DnaJ_domain_CS"/>
</dbReference>
<dbReference type="InterPro" id="IPR008971">
    <property type="entry name" value="HSP40/DnaJ_pept-bd"/>
</dbReference>
<dbReference type="InterPro" id="IPR001305">
    <property type="entry name" value="HSP_DnaJ_Cys-rich_dom"/>
</dbReference>
<dbReference type="InterPro" id="IPR036410">
    <property type="entry name" value="HSP_DnaJ_Cys-rich_dom_sf"/>
</dbReference>
<dbReference type="InterPro" id="IPR036869">
    <property type="entry name" value="J_dom_sf"/>
</dbReference>
<dbReference type="NCBIfam" id="TIGR02349">
    <property type="entry name" value="DnaJ_bact"/>
    <property type="match status" value="1"/>
</dbReference>
<dbReference type="NCBIfam" id="NF008035">
    <property type="entry name" value="PRK10767.1"/>
    <property type="match status" value="1"/>
</dbReference>
<dbReference type="NCBIfam" id="NF010893">
    <property type="entry name" value="PRK14300.1"/>
    <property type="match status" value="1"/>
</dbReference>
<dbReference type="PANTHER" id="PTHR43096">
    <property type="entry name" value="DNAJ HOMOLOG 1, MITOCHONDRIAL-RELATED"/>
    <property type="match status" value="1"/>
</dbReference>
<dbReference type="PANTHER" id="PTHR43096:SF52">
    <property type="entry name" value="DNAJ HOMOLOG 1, MITOCHONDRIAL-RELATED"/>
    <property type="match status" value="1"/>
</dbReference>
<dbReference type="Pfam" id="PF00226">
    <property type="entry name" value="DnaJ"/>
    <property type="match status" value="1"/>
</dbReference>
<dbReference type="Pfam" id="PF01556">
    <property type="entry name" value="DnaJ_C"/>
    <property type="match status" value="1"/>
</dbReference>
<dbReference type="Pfam" id="PF00684">
    <property type="entry name" value="DnaJ_CXXCXGXG"/>
    <property type="match status" value="1"/>
</dbReference>
<dbReference type="PRINTS" id="PR00625">
    <property type="entry name" value="JDOMAIN"/>
</dbReference>
<dbReference type="SMART" id="SM00271">
    <property type="entry name" value="DnaJ"/>
    <property type="match status" value="1"/>
</dbReference>
<dbReference type="SUPFAM" id="SSF46565">
    <property type="entry name" value="Chaperone J-domain"/>
    <property type="match status" value="1"/>
</dbReference>
<dbReference type="SUPFAM" id="SSF57938">
    <property type="entry name" value="DnaJ/Hsp40 cysteine-rich domain"/>
    <property type="match status" value="1"/>
</dbReference>
<dbReference type="SUPFAM" id="SSF49493">
    <property type="entry name" value="HSP40/DnaJ peptide-binding domain"/>
    <property type="match status" value="2"/>
</dbReference>
<dbReference type="PROSITE" id="PS00636">
    <property type="entry name" value="DNAJ_1"/>
    <property type="match status" value="1"/>
</dbReference>
<dbReference type="PROSITE" id="PS50076">
    <property type="entry name" value="DNAJ_2"/>
    <property type="match status" value="1"/>
</dbReference>
<dbReference type="PROSITE" id="PS51188">
    <property type="entry name" value="ZF_CR"/>
    <property type="match status" value="1"/>
</dbReference>
<organism>
    <name type="scientific">Rickettsia rickettsii (strain Iowa)</name>
    <dbReference type="NCBI Taxonomy" id="452659"/>
    <lineage>
        <taxon>Bacteria</taxon>
        <taxon>Pseudomonadati</taxon>
        <taxon>Pseudomonadota</taxon>
        <taxon>Alphaproteobacteria</taxon>
        <taxon>Rickettsiales</taxon>
        <taxon>Rickettsiaceae</taxon>
        <taxon>Rickettsieae</taxon>
        <taxon>Rickettsia</taxon>
        <taxon>spotted fever group</taxon>
    </lineage>
</organism>
<sequence>MSQNYYQILGVSKTASQADLKKAYLKLAKQYHPDTTDAKDAEKKFKAINAAYDVLKDEQKRAAYDRLGHDAFQNQQSRGGGGNHGGFHPDINDIFGDFFSDFMGGSRRSSRPTSAKVRGSDLKYNLTINLEEAFHGIEKNINFSSAVKCDTCHGSGSEKGETVTTCDACSGVGATRMQQGFFTIEQACHKCQGNGHIIKNPCKKCHGMGRYHKQRNLSVNIPAGVENGTRIRHTGEGEAGIRGGNSGDLYVDITIKPHDIYKVDGANLHCKLPISFVNAALGGEIEVPVIEGGKVSLTIPAGTQNGDQLRLRSKGMSKMRSTIRGDMLTHIHVEVPKNLSKRQRELLEEFKKESINEKENDGSFFNKMKSLWS</sequence>
<accession>B0BWH0</accession>
<protein>
    <recommendedName>
        <fullName evidence="1">Chaperone protein DnaJ</fullName>
    </recommendedName>
</protein>
<name>DNAJ_RICRO</name>